<name>TRMD_CHLTB</name>
<gene>
    <name evidence="1" type="primary">trmD</name>
    <name type="ordered locus">CTLon_0277</name>
</gene>
<sequence length="352" mass="39780">MEIDILSLFPDYFASPLQATILGRAIKQGALSVRSRDIREFGLGKWKQVDDSPYNGEGMLLMAEPVVQAIRSIRRKKSKVIYLSPQGQLLSAKKSRELASCSHLVLLCGHYEGIDERALTAEVDEEISIGDYVLTNGCAAALVLVDALARFIPGILGNQESAEYDSLENGLLEGPQYTRPRVFEGESVPEVLLCGDHQKIADWRKQVSLERTRERRPDLYLQYFYGNSACLSTQEDLPRIEVVSPKTFSVVLEVQDLRKAKKFYSRMFGKECWDGDKLFLLGKTSLYLQQTKETRGPTTVFIELETDHDFVRFLKRWEMLGGELGEQGTGGFPLRQVFDLDGHIWVVSCVQK</sequence>
<dbReference type="EC" id="2.1.1.228" evidence="1"/>
<dbReference type="EMBL" id="AM884177">
    <property type="protein sequence ID" value="CAP06675.1"/>
    <property type="molecule type" value="Genomic_DNA"/>
</dbReference>
<dbReference type="RefSeq" id="WP_009873504.1">
    <property type="nucleotide sequence ID" value="NC_010280.2"/>
</dbReference>
<dbReference type="SMR" id="B0BB13"/>
<dbReference type="KEGG" id="ctl:CTLon_0277"/>
<dbReference type="HOGENOM" id="CLU_047363_0_2_0"/>
<dbReference type="Proteomes" id="UP001154401">
    <property type="component" value="Chromosome"/>
</dbReference>
<dbReference type="GO" id="GO:0005829">
    <property type="term" value="C:cytosol"/>
    <property type="evidence" value="ECO:0007669"/>
    <property type="project" value="TreeGrafter"/>
</dbReference>
<dbReference type="GO" id="GO:0052906">
    <property type="term" value="F:tRNA (guanine(37)-N1)-methyltransferase activity"/>
    <property type="evidence" value="ECO:0007669"/>
    <property type="project" value="UniProtKB-UniRule"/>
</dbReference>
<dbReference type="GO" id="GO:0002939">
    <property type="term" value="P:tRNA N1-guanine methylation"/>
    <property type="evidence" value="ECO:0007669"/>
    <property type="project" value="TreeGrafter"/>
</dbReference>
<dbReference type="CDD" id="cd18080">
    <property type="entry name" value="TrmD-like"/>
    <property type="match status" value="1"/>
</dbReference>
<dbReference type="CDD" id="cd06587">
    <property type="entry name" value="VOC"/>
    <property type="match status" value="1"/>
</dbReference>
<dbReference type="FunFam" id="1.10.1270.20:FF:000004">
    <property type="entry name" value="tRNA (guanine-N(1)-)-methyltransferase"/>
    <property type="match status" value="1"/>
</dbReference>
<dbReference type="FunFam" id="3.40.1280.10:FF:000001">
    <property type="entry name" value="tRNA (guanine-N(1)-)-methyltransferase"/>
    <property type="match status" value="1"/>
</dbReference>
<dbReference type="Gene3D" id="3.40.1280.10">
    <property type="match status" value="1"/>
</dbReference>
<dbReference type="Gene3D" id="3.10.180.10">
    <property type="entry name" value="2,3-Dihydroxybiphenyl 1,2-Dioxygenase, domain 1"/>
    <property type="match status" value="1"/>
</dbReference>
<dbReference type="Gene3D" id="1.10.1270.20">
    <property type="entry name" value="tRNA(m1g37)methyltransferase, domain 2"/>
    <property type="match status" value="1"/>
</dbReference>
<dbReference type="HAMAP" id="MF_00605">
    <property type="entry name" value="TrmD"/>
    <property type="match status" value="1"/>
</dbReference>
<dbReference type="InterPro" id="IPR029028">
    <property type="entry name" value="Alpha/beta_knot_MTases"/>
</dbReference>
<dbReference type="InterPro" id="IPR029068">
    <property type="entry name" value="Glyas_Bleomycin-R_OHBP_Dase"/>
</dbReference>
<dbReference type="InterPro" id="IPR023148">
    <property type="entry name" value="tRNA_m1G_MeTrfase_C_sf"/>
</dbReference>
<dbReference type="InterPro" id="IPR002649">
    <property type="entry name" value="tRNA_m1G_MeTrfase_TrmD"/>
</dbReference>
<dbReference type="InterPro" id="IPR029026">
    <property type="entry name" value="tRNA_m1G_MTases_N"/>
</dbReference>
<dbReference type="InterPro" id="IPR016009">
    <property type="entry name" value="tRNA_MeTrfase_TRMD/TRM10"/>
</dbReference>
<dbReference type="NCBIfam" id="NF000648">
    <property type="entry name" value="PRK00026.1"/>
    <property type="match status" value="1"/>
</dbReference>
<dbReference type="NCBIfam" id="TIGR00088">
    <property type="entry name" value="trmD"/>
    <property type="match status" value="1"/>
</dbReference>
<dbReference type="PANTHER" id="PTHR46417">
    <property type="entry name" value="TRNA (GUANINE-N(1)-)-METHYLTRANSFERASE"/>
    <property type="match status" value="1"/>
</dbReference>
<dbReference type="PANTHER" id="PTHR46417:SF1">
    <property type="entry name" value="TRNA (GUANINE-N(1)-)-METHYLTRANSFERASE"/>
    <property type="match status" value="1"/>
</dbReference>
<dbReference type="Pfam" id="PF01746">
    <property type="entry name" value="tRNA_m1G_MT"/>
    <property type="match status" value="1"/>
</dbReference>
<dbReference type="SUPFAM" id="SSF75217">
    <property type="entry name" value="alpha/beta knot"/>
    <property type="match status" value="1"/>
</dbReference>
<dbReference type="SUPFAM" id="SSF54593">
    <property type="entry name" value="Glyoxalase/Bleomycin resistance protein/Dihydroxybiphenyl dioxygenase"/>
    <property type="match status" value="1"/>
</dbReference>
<proteinExistence type="inferred from homology"/>
<evidence type="ECO:0000255" key="1">
    <source>
        <dbReference type="HAMAP-Rule" id="MF_00605"/>
    </source>
</evidence>
<protein>
    <recommendedName>
        <fullName evidence="1">tRNA (guanine-N(1)-)-methyltransferase</fullName>
        <ecNumber evidence="1">2.1.1.228</ecNumber>
    </recommendedName>
    <alternativeName>
        <fullName evidence="1">M1G-methyltransferase</fullName>
    </alternativeName>
    <alternativeName>
        <fullName evidence="1">tRNA [GM37] methyltransferase</fullName>
    </alternativeName>
</protein>
<reference key="1">
    <citation type="journal article" date="2008" name="Genome Res.">
        <title>Chlamydia trachomatis: genome sequence analysis of lymphogranuloma venereum isolates.</title>
        <authorList>
            <person name="Thomson N.R."/>
            <person name="Holden M.T.G."/>
            <person name="Carder C."/>
            <person name="Lennard N."/>
            <person name="Lockey S.J."/>
            <person name="Marsh P."/>
            <person name="Skipp P."/>
            <person name="O'Connor C.D."/>
            <person name="Goodhead I."/>
            <person name="Norbertzcak H."/>
            <person name="Harris B."/>
            <person name="Ormond D."/>
            <person name="Rance R."/>
            <person name="Quail M.A."/>
            <person name="Parkhill J."/>
            <person name="Stephens R.S."/>
            <person name="Clarke I.N."/>
        </authorList>
    </citation>
    <scope>NUCLEOTIDE SEQUENCE [LARGE SCALE GENOMIC DNA]</scope>
    <source>
        <strain>UCH-1/proctitis</strain>
    </source>
</reference>
<feature type="chain" id="PRO_1000130149" description="tRNA (guanine-N(1)-)-methyltransferase">
    <location>
        <begin position="1"/>
        <end position="352"/>
    </location>
</feature>
<feature type="binding site" evidence="1">
    <location>
        <position position="109"/>
    </location>
    <ligand>
        <name>S-adenosyl-L-methionine</name>
        <dbReference type="ChEBI" id="CHEBI:59789"/>
    </ligand>
</feature>
<feature type="binding site" evidence="1">
    <location>
        <begin position="129"/>
        <end position="134"/>
    </location>
    <ligand>
        <name>S-adenosyl-L-methionine</name>
        <dbReference type="ChEBI" id="CHEBI:59789"/>
    </ligand>
</feature>
<accession>B0BB13</accession>
<organism>
    <name type="scientific">Chlamydia trachomatis serovar L2b (strain UCH-1/proctitis)</name>
    <dbReference type="NCBI Taxonomy" id="471473"/>
    <lineage>
        <taxon>Bacteria</taxon>
        <taxon>Pseudomonadati</taxon>
        <taxon>Chlamydiota</taxon>
        <taxon>Chlamydiia</taxon>
        <taxon>Chlamydiales</taxon>
        <taxon>Chlamydiaceae</taxon>
        <taxon>Chlamydia/Chlamydophila group</taxon>
        <taxon>Chlamydia</taxon>
    </lineage>
</organism>
<keyword id="KW-0963">Cytoplasm</keyword>
<keyword id="KW-0489">Methyltransferase</keyword>
<keyword id="KW-0949">S-adenosyl-L-methionine</keyword>
<keyword id="KW-0808">Transferase</keyword>
<keyword id="KW-0819">tRNA processing</keyword>
<comment type="function">
    <text evidence="1">Specifically methylates guanosine-37 in various tRNAs.</text>
</comment>
<comment type="catalytic activity">
    <reaction evidence="1">
        <text>guanosine(37) in tRNA + S-adenosyl-L-methionine = N(1)-methylguanosine(37) in tRNA + S-adenosyl-L-homocysteine + H(+)</text>
        <dbReference type="Rhea" id="RHEA:36899"/>
        <dbReference type="Rhea" id="RHEA-COMP:10145"/>
        <dbReference type="Rhea" id="RHEA-COMP:10147"/>
        <dbReference type="ChEBI" id="CHEBI:15378"/>
        <dbReference type="ChEBI" id="CHEBI:57856"/>
        <dbReference type="ChEBI" id="CHEBI:59789"/>
        <dbReference type="ChEBI" id="CHEBI:73542"/>
        <dbReference type="ChEBI" id="CHEBI:74269"/>
        <dbReference type="EC" id="2.1.1.228"/>
    </reaction>
</comment>
<comment type="subunit">
    <text evidence="1">Homodimer.</text>
</comment>
<comment type="subcellular location">
    <subcellularLocation>
        <location evidence="1">Cytoplasm</location>
    </subcellularLocation>
</comment>
<comment type="similarity">
    <text evidence="1">Belongs to the RNA methyltransferase TrmD family.</text>
</comment>